<name>PFKA1_THET8</name>
<dbReference type="EC" id="2.7.1.11" evidence="2"/>
<dbReference type="EMBL" id="M71213">
    <property type="protein sequence ID" value="AAA27501.1"/>
    <property type="molecule type" value="Genomic_DNA"/>
</dbReference>
<dbReference type="EMBL" id="AP008226">
    <property type="protein sequence ID" value="BAD71785.1"/>
    <property type="molecule type" value="Genomic_DNA"/>
</dbReference>
<dbReference type="RefSeq" id="WP_011173968.1">
    <property type="nucleotide sequence ID" value="NC_006461.1"/>
</dbReference>
<dbReference type="RefSeq" id="YP_145228.1">
    <property type="nucleotide sequence ID" value="NC_006461.1"/>
</dbReference>
<dbReference type="SMR" id="P21777"/>
<dbReference type="EnsemblBacteria" id="BAD71785">
    <property type="protein sequence ID" value="BAD71785"/>
    <property type="gene ID" value="BAD71785"/>
</dbReference>
<dbReference type="GeneID" id="3169721"/>
<dbReference type="KEGG" id="ttj:TTHA1962"/>
<dbReference type="PATRIC" id="fig|300852.9.peg.1933"/>
<dbReference type="eggNOG" id="COG0205">
    <property type="taxonomic scope" value="Bacteria"/>
</dbReference>
<dbReference type="HOGENOM" id="CLU_020655_0_1_0"/>
<dbReference type="PhylomeDB" id="P21777"/>
<dbReference type="BRENDA" id="2.7.1.11">
    <property type="organism ID" value="2305"/>
</dbReference>
<dbReference type="UniPathway" id="UPA00109">
    <property type="reaction ID" value="UER00182"/>
</dbReference>
<dbReference type="Proteomes" id="UP000000532">
    <property type="component" value="Chromosome"/>
</dbReference>
<dbReference type="GO" id="GO:0005945">
    <property type="term" value="C:6-phosphofructokinase complex"/>
    <property type="evidence" value="ECO:0007669"/>
    <property type="project" value="TreeGrafter"/>
</dbReference>
<dbReference type="GO" id="GO:0003872">
    <property type="term" value="F:6-phosphofructokinase activity"/>
    <property type="evidence" value="ECO:0007669"/>
    <property type="project" value="UniProtKB-UniRule"/>
</dbReference>
<dbReference type="GO" id="GO:0016208">
    <property type="term" value="F:AMP binding"/>
    <property type="evidence" value="ECO:0007669"/>
    <property type="project" value="TreeGrafter"/>
</dbReference>
<dbReference type="GO" id="GO:0005524">
    <property type="term" value="F:ATP binding"/>
    <property type="evidence" value="ECO:0007669"/>
    <property type="project" value="UniProtKB-KW"/>
</dbReference>
<dbReference type="GO" id="GO:0070095">
    <property type="term" value="F:fructose-6-phosphate binding"/>
    <property type="evidence" value="ECO:0007669"/>
    <property type="project" value="TreeGrafter"/>
</dbReference>
<dbReference type="GO" id="GO:0042802">
    <property type="term" value="F:identical protein binding"/>
    <property type="evidence" value="ECO:0007669"/>
    <property type="project" value="TreeGrafter"/>
</dbReference>
<dbReference type="GO" id="GO:0046872">
    <property type="term" value="F:metal ion binding"/>
    <property type="evidence" value="ECO:0007669"/>
    <property type="project" value="UniProtKB-KW"/>
</dbReference>
<dbReference type="GO" id="GO:0048029">
    <property type="term" value="F:monosaccharide binding"/>
    <property type="evidence" value="ECO:0007669"/>
    <property type="project" value="TreeGrafter"/>
</dbReference>
<dbReference type="GO" id="GO:0061621">
    <property type="term" value="P:canonical glycolysis"/>
    <property type="evidence" value="ECO:0007669"/>
    <property type="project" value="TreeGrafter"/>
</dbReference>
<dbReference type="GO" id="GO:0030388">
    <property type="term" value="P:fructose 1,6-bisphosphate metabolic process"/>
    <property type="evidence" value="ECO:0007669"/>
    <property type="project" value="TreeGrafter"/>
</dbReference>
<dbReference type="GO" id="GO:0006002">
    <property type="term" value="P:fructose 6-phosphate metabolic process"/>
    <property type="evidence" value="ECO:0007669"/>
    <property type="project" value="InterPro"/>
</dbReference>
<dbReference type="FunFam" id="3.40.50.450:FF:000001">
    <property type="entry name" value="ATP-dependent 6-phosphofructokinase"/>
    <property type="match status" value="1"/>
</dbReference>
<dbReference type="FunFam" id="3.40.50.460:FF:000002">
    <property type="entry name" value="ATP-dependent 6-phosphofructokinase"/>
    <property type="match status" value="1"/>
</dbReference>
<dbReference type="Gene3D" id="3.40.50.450">
    <property type="match status" value="1"/>
</dbReference>
<dbReference type="Gene3D" id="3.40.50.460">
    <property type="entry name" value="Phosphofructokinase domain"/>
    <property type="match status" value="1"/>
</dbReference>
<dbReference type="HAMAP" id="MF_00339">
    <property type="entry name" value="Phosphofructokinase_I_B1"/>
    <property type="match status" value="1"/>
</dbReference>
<dbReference type="InterPro" id="IPR022953">
    <property type="entry name" value="ATP_PFK"/>
</dbReference>
<dbReference type="InterPro" id="IPR012003">
    <property type="entry name" value="ATP_PFK_prok-type"/>
</dbReference>
<dbReference type="InterPro" id="IPR012828">
    <property type="entry name" value="PFKA_ATP_prok"/>
</dbReference>
<dbReference type="InterPro" id="IPR015912">
    <property type="entry name" value="Phosphofructokinase_CS"/>
</dbReference>
<dbReference type="InterPro" id="IPR000023">
    <property type="entry name" value="Phosphofructokinase_dom"/>
</dbReference>
<dbReference type="InterPro" id="IPR035966">
    <property type="entry name" value="PKF_sf"/>
</dbReference>
<dbReference type="NCBIfam" id="TIGR02482">
    <property type="entry name" value="PFKA_ATP"/>
    <property type="match status" value="1"/>
</dbReference>
<dbReference type="NCBIfam" id="NF002872">
    <property type="entry name" value="PRK03202.1"/>
    <property type="match status" value="1"/>
</dbReference>
<dbReference type="PANTHER" id="PTHR13697:SF4">
    <property type="entry name" value="ATP-DEPENDENT 6-PHOSPHOFRUCTOKINASE"/>
    <property type="match status" value="1"/>
</dbReference>
<dbReference type="PANTHER" id="PTHR13697">
    <property type="entry name" value="PHOSPHOFRUCTOKINASE"/>
    <property type="match status" value="1"/>
</dbReference>
<dbReference type="Pfam" id="PF00365">
    <property type="entry name" value="PFK"/>
    <property type="match status" value="1"/>
</dbReference>
<dbReference type="PIRSF" id="PIRSF000532">
    <property type="entry name" value="ATP_PFK_prok"/>
    <property type="match status" value="1"/>
</dbReference>
<dbReference type="PRINTS" id="PR00476">
    <property type="entry name" value="PHFRCTKINASE"/>
</dbReference>
<dbReference type="SUPFAM" id="SSF53784">
    <property type="entry name" value="Phosphofructokinase"/>
    <property type="match status" value="1"/>
</dbReference>
<dbReference type="PROSITE" id="PS00433">
    <property type="entry name" value="PHOSPHOFRUCTOKINASE"/>
    <property type="match status" value="1"/>
</dbReference>
<gene>
    <name evidence="2" type="primary">pfkA</name>
    <name type="ordered locus">TTHA1962</name>
</gene>
<reference key="1">
    <citation type="journal article" date="1991" name="Biochem. Biophys. Res. Commun.">
        <title>Molecular cloning of phosphofructokinase 1 gene from a thermophilic bacterium, Thermus thermophilus.</title>
        <authorList>
            <person name="Xu J."/>
            <person name="Seki M."/>
            <person name="Denda K."/>
            <person name="Yoshida M."/>
        </authorList>
    </citation>
    <scope>NUCLEOTIDE SEQUENCE [GENOMIC DNA]</scope>
</reference>
<reference key="2">
    <citation type="submission" date="2004-11" db="EMBL/GenBank/DDBJ databases">
        <title>Complete genome sequence of Thermus thermophilus HB8.</title>
        <authorList>
            <person name="Masui R."/>
            <person name="Kurokawa K."/>
            <person name="Nakagawa N."/>
            <person name="Tokunaga F."/>
            <person name="Koyama Y."/>
            <person name="Shibata T."/>
            <person name="Oshima T."/>
            <person name="Yokoyama S."/>
            <person name="Yasunaga T."/>
            <person name="Kuramitsu S."/>
        </authorList>
    </citation>
    <scope>NUCLEOTIDE SEQUENCE [LARGE SCALE GENOMIC DNA]</scope>
    <source>
        <strain>ATCC 27634 / DSM 579 / HB8</strain>
    </source>
</reference>
<reference key="3">
    <citation type="journal article" date="1991" name="J. Biochem.">
        <title>Phosphoenolpyruvate-insensitive phosphofructokinase isozyme from Thermus thermophilus HB8.</title>
        <authorList>
            <person name="Xu J."/>
            <person name="Oshima T."/>
            <person name="Yoshida M."/>
        </authorList>
    </citation>
    <scope>PROTEIN SEQUENCE OF 1-25</scope>
</reference>
<reference key="4">
    <citation type="journal article" date="1972" name="Biochemistry">
        <title>Allosteric nature of thermostable phosphofructokinase from an extreme thermophilic bacterium.</title>
        <authorList>
            <person name="Yoshida M."/>
        </authorList>
    </citation>
    <scope>FUNCTION</scope>
    <scope>ACTIVITY REGULATION</scope>
    <scope>CATALYTIC ACTIVITY</scope>
    <scope>BIOPHYSICOCHEMICAL PROPERTIES</scope>
    <source>
        <strain>ATCC 27634 / DSM 579 / HB8</strain>
    </source>
</reference>
<reference key="5">
    <citation type="journal article" date="1990" name="J. Mol. Biol.">
        <title>Tetramer-dimer conversion of phosphofructokinase from Thermus thermophilus induced by its allosteric effectors.</title>
        <authorList>
            <person name="Xu J."/>
            <person name="Oshima T."/>
            <person name="Yoshida M."/>
        </authorList>
    </citation>
    <scope>FUNCTION</scope>
    <scope>CATALYTIC ACTIVITY</scope>
    <scope>SUBUNIT</scope>
    <source>
        <strain>ATCC 27634 / DSM 579 / HB8</strain>
    </source>
</reference>
<proteinExistence type="evidence at protein level"/>
<accession>P21777</accession>
<accession>Q5SGW8</accession>
<evidence type="ECO:0000250" key="1"/>
<evidence type="ECO:0000255" key="2">
    <source>
        <dbReference type="HAMAP-Rule" id="MF_00339"/>
    </source>
</evidence>
<evidence type="ECO:0000269" key="3">
    <source>
    </source>
</evidence>
<evidence type="ECO:0000269" key="4">
    <source>
    </source>
</evidence>
<evidence type="ECO:0000305" key="5"/>
<protein>
    <recommendedName>
        <fullName evidence="2">ATP-dependent 6-phosphofructokinase 1</fullName>
        <shortName evidence="2">ATP-PFK 1</shortName>
        <shortName evidence="2">Phosphofructokinase 1</shortName>
        <ecNumber evidence="2">2.7.1.11</ecNumber>
    </recommendedName>
    <alternativeName>
        <fullName evidence="2">Phosphohexokinase 1</fullName>
    </alternativeName>
</protein>
<comment type="function">
    <text evidence="2 3 4">Catalyzes the phosphorylation of D-fructose 6-phosphate to fructose 1,6-bisphosphate by ATP, the first committing step of glycolysis.</text>
</comment>
<comment type="catalytic activity">
    <reaction evidence="2 3 4">
        <text>beta-D-fructose 6-phosphate + ATP = beta-D-fructose 1,6-bisphosphate + ADP + H(+)</text>
        <dbReference type="Rhea" id="RHEA:16109"/>
        <dbReference type="ChEBI" id="CHEBI:15378"/>
        <dbReference type="ChEBI" id="CHEBI:30616"/>
        <dbReference type="ChEBI" id="CHEBI:32966"/>
        <dbReference type="ChEBI" id="CHEBI:57634"/>
        <dbReference type="ChEBI" id="CHEBI:456216"/>
        <dbReference type="EC" id="2.7.1.11"/>
    </reaction>
</comment>
<comment type="cofactor">
    <cofactor evidence="2">
        <name>Mg(2+)</name>
        <dbReference type="ChEBI" id="CHEBI:18420"/>
    </cofactor>
</comment>
<comment type="activity regulation">
    <text evidence="1 4">Allosterically activated by ADP and other diphosphonucleosides (By similarity). Allosterically inhibited by phosphoenolpyruvate which induces the dissociation of the active tetramer into an inactive two-subunit forms.</text>
</comment>
<comment type="biophysicochemical properties">
    <kinetics>
        <KM evidence="4">0.08 mM for ATP</KM>
        <KM evidence="4">0.025 mM for fructose 6-phosphate</KM>
    </kinetics>
    <phDependence>
        <text evidence="4">Optimum pH is 8.4.</text>
    </phDependence>
    <temperatureDependence>
        <text evidence="4">Optimum temperature is 85 degrees Celsius.</text>
    </temperatureDependence>
</comment>
<comment type="pathway">
    <text evidence="2">Carbohydrate degradation; glycolysis; D-glyceraldehyde 3-phosphate and glycerone phosphate from D-glucose: step 3/4.</text>
</comment>
<comment type="subunit">
    <text evidence="2 3">Homotetramer.</text>
</comment>
<comment type="subcellular location">
    <subcellularLocation>
        <location evidence="2">Cytoplasm</location>
    </subcellularLocation>
</comment>
<comment type="similarity">
    <text evidence="2">Belongs to the phosphofructokinase type A (PFKA) family. ATP-dependent PFK group I subfamily. Prokaryotic clade 'B1' sub-subfamily.</text>
</comment>
<organism>
    <name type="scientific">Thermus thermophilus (strain ATCC 27634 / DSM 579 / HB8)</name>
    <dbReference type="NCBI Taxonomy" id="300852"/>
    <lineage>
        <taxon>Bacteria</taxon>
        <taxon>Thermotogati</taxon>
        <taxon>Deinococcota</taxon>
        <taxon>Deinococci</taxon>
        <taxon>Thermales</taxon>
        <taxon>Thermaceae</taxon>
        <taxon>Thermus</taxon>
    </lineage>
</organism>
<keyword id="KW-0021">Allosteric enzyme</keyword>
<keyword id="KW-0067">ATP-binding</keyword>
<keyword id="KW-0963">Cytoplasm</keyword>
<keyword id="KW-0903">Direct protein sequencing</keyword>
<keyword id="KW-0324">Glycolysis</keyword>
<keyword id="KW-0418">Kinase</keyword>
<keyword id="KW-0460">Magnesium</keyword>
<keyword id="KW-0479">Metal-binding</keyword>
<keyword id="KW-0547">Nucleotide-binding</keyword>
<keyword id="KW-1185">Reference proteome</keyword>
<keyword id="KW-0808">Transferase</keyword>
<feature type="chain" id="PRO_0000112001" description="ATP-dependent 6-phosphofructokinase 1">
    <location>
        <begin position="1"/>
        <end position="322"/>
    </location>
</feature>
<feature type="active site" description="Proton acceptor" evidence="2">
    <location>
        <position position="128"/>
    </location>
</feature>
<feature type="binding site" evidence="2">
    <location>
        <position position="11"/>
    </location>
    <ligand>
        <name>ATP</name>
        <dbReference type="ChEBI" id="CHEBI:30616"/>
    </ligand>
</feature>
<feature type="binding site" evidence="2">
    <location>
        <begin position="21"/>
        <end position="25"/>
    </location>
    <ligand>
        <name>ADP</name>
        <dbReference type="ChEBI" id="CHEBI:456216"/>
        <note>allosteric activator; ligand shared between dimeric partners</note>
    </ligand>
</feature>
<feature type="binding site" evidence="2">
    <location>
        <begin position="72"/>
        <end position="73"/>
    </location>
    <ligand>
        <name>ATP</name>
        <dbReference type="ChEBI" id="CHEBI:30616"/>
    </ligand>
</feature>
<feature type="binding site" evidence="2">
    <location>
        <begin position="102"/>
        <end position="105"/>
    </location>
    <ligand>
        <name>ATP</name>
        <dbReference type="ChEBI" id="CHEBI:30616"/>
    </ligand>
</feature>
<feature type="binding site" evidence="2">
    <location>
        <position position="103"/>
    </location>
    <ligand>
        <name>Mg(2+)</name>
        <dbReference type="ChEBI" id="CHEBI:18420"/>
        <note>catalytic</note>
    </ligand>
</feature>
<feature type="binding site" description="in other chain" evidence="2">
    <location>
        <begin position="126"/>
        <end position="128"/>
    </location>
    <ligand>
        <name>substrate</name>
        <note>ligand shared between dimeric partners</note>
    </ligand>
</feature>
<feature type="binding site" description="in other chain" evidence="2">
    <location>
        <position position="155"/>
    </location>
    <ligand>
        <name>ADP</name>
        <dbReference type="ChEBI" id="CHEBI:456216"/>
        <note>allosteric activator; ligand shared between dimeric partners</note>
    </ligand>
</feature>
<feature type="binding site" evidence="2">
    <location>
        <position position="163"/>
    </location>
    <ligand>
        <name>substrate</name>
        <note>ligand shared between dimeric partners</note>
    </ligand>
</feature>
<feature type="binding site" description="in other chain" evidence="2">
    <location>
        <begin position="170"/>
        <end position="172"/>
    </location>
    <ligand>
        <name>substrate</name>
        <note>ligand shared between dimeric partners</note>
    </ligand>
</feature>
<feature type="binding site" description="in other chain" evidence="2">
    <location>
        <begin position="186"/>
        <end position="188"/>
    </location>
    <ligand>
        <name>ADP</name>
        <dbReference type="ChEBI" id="CHEBI:456216"/>
        <note>allosteric activator; ligand shared between dimeric partners</note>
    </ligand>
</feature>
<feature type="binding site" description="in other chain" evidence="2">
    <location>
        <position position="212"/>
    </location>
    <ligand>
        <name>ADP</name>
        <dbReference type="ChEBI" id="CHEBI:456216"/>
        <note>allosteric activator; ligand shared between dimeric partners</note>
    </ligand>
</feature>
<feature type="binding site" description="in other chain" evidence="2">
    <location>
        <begin position="214"/>
        <end position="216"/>
    </location>
    <ligand>
        <name>ADP</name>
        <dbReference type="ChEBI" id="CHEBI:456216"/>
        <note>allosteric activator; ligand shared between dimeric partners</note>
    </ligand>
</feature>
<feature type="binding site" description="in other chain" evidence="2">
    <location>
        <position position="223"/>
    </location>
    <ligand>
        <name>substrate</name>
        <note>ligand shared between dimeric partners</note>
    </ligand>
</feature>
<feature type="binding site" evidence="2">
    <location>
        <position position="246"/>
    </location>
    <ligand>
        <name>substrate</name>
        <note>ligand shared between dimeric partners</note>
    </ligand>
</feature>
<feature type="binding site" description="in other chain" evidence="2">
    <location>
        <begin position="252"/>
        <end position="255"/>
    </location>
    <ligand>
        <name>substrate</name>
        <note>ligand shared between dimeric partners</note>
    </ligand>
</feature>
<feature type="sequence conflict" description="In Ref. 1; AAA27501." evidence="5" ref="1">
    <original>C</original>
    <variation>F</variation>
    <location>
        <position position="111"/>
    </location>
</feature>
<feature type="sequence conflict" description="In Ref. 1; AAA27501." evidence="5" ref="1">
    <original>A</original>
    <variation>P</variation>
    <location>
        <position position="273"/>
    </location>
</feature>
<sequence>MKRIGVFTSGGDAPGMNAAIRAVVRQAHALGVEVIGIRRGYAGMIQGEMVPLGVRDVANIIQRGGTILLTARSQEFLTEEGRAKAYAKLQAAGIEGLVAIGGDGTFRGALCLVEEHGMPVVGVPGTIDNDLYGTDYTIGFDTAVNTALEAIDRIRDTAASHERVFFIEVMGRHAGFIALDVGLAGGAEVIAVPEEPVDPKAVAEVLEASQRRGKKSSIVVVAEGAYPGGAAGLLAAIREHLQVEARVTVLGHIQRGGSPTAKDRILASRLGAAAVEALVGGASGVMVGEVEGEVDLTPLKEAVERRKDINRALLRLSQVLAL</sequence>